<protein>
    <recommendedName>
        <fullName evidence="1">Undecaprenyl-diphosphatase</fullName>
        <ecNumber evidence="1">3.6.1.27</ecNumber>
    </recommendedName>
    <alternativeName>
        <fullName evidence="1">Bacitracin resistance protein</fullName>
    </alternativeName>
    <alternativeName>
        <fullName evidence="1">Undecaprenyl pyrophosphate phosphatase</fullName>
    </alternativeName>
</protein>
<keyword id="KW-0046">Antibiotic resistance</keyword>
<keyword id="KW-0997">Cell inner membrane</keyword>
<keyword id="KW-1003">Cell membrane</keyword>
<keyword id="KW-0133">Cell shape</keyword>
<keyword id="KW-0961">Cell wall biogenesis/degradation</keyword>
<keyword id="KW-0378">Hydrolase</keyword>
<keyword id="KW-0472">Membrane</keyword>
<keyword id="KW-0573">Peptidoglycan synthesis</keyword>
<keyword id="KW-1185">Reference proteome</keyword>
<keyword id="KW-0812">Transmembrane</keyword>
<keyword id="KW-1133">Transmembrane helix</keyword>
<dbReference type="EC" id="3.6.1.27" evidence="1"/>
<dbReference type="EMBL" id="CP000153">
    <property type="protein sequence ID" value="ABB43353.1"/>
    <property type="molecule type" value="Genomic_DNA"/>
</dbReference>
<dbReference type="RefSeq" id="WP_011371708.1">
    <property type="nucleotide sequence ID" value="NC_007575.1"/>
</dbReference>
<dbReference type="SMR" id="Q30UH8"/>
<dbReference type="STRING" id="326298.Suden_0072"/>
<dbReference type="KEGG" id="tdn:Suden_0072"/>
<dbReference type="eggNOG" id="COG1968">
    <property type="taxonomic scope" value="Bacteria"/>
</dbReference>
<dbReference type="HOGENOM" id="CLU_060296_2_0_7"/>
<dbReference type="OrthoDB" id="9808289at2"/>
<dbReference type="Proteomes" id="UP000002714">
    <property type="component" value="Chromosome"/>
</dbReference>
<dbReference type="GO" id="GO:0005886">
    <property type="term" value="C:plasma membrane"/>
    <property type="evidence" value="ECO:0007669"/>
    <property type="project" value="UniProtKB-SubCell"/>
</dbReference>
<dbReference type="GO" id="GO:0050380">
    <property type="term" value="F:undecaprenyl-diphosphatase activity"/>
    <property type="evidence" value="ECO:0007669"/>
    <property type="project" value="UniProtKB-UniRule"/>
</dbReference>
<dbReference type="GO" id="GO:0071555">
    <property type="term" value="P:cell wall organization"/>
    <property type="evidence" value="ECO:0007669"/>
    <property type="project" value="UniProtKB-KW"/>
</dbReference>
<dbReference type="GO" id="GO:0009252">
    <property type="term" value="P:peptidoglycan biosynthetic process"/>
    <property type="evidence" value="ECO:0007669"/>
    <property type="project" value="UniProtKB-KW"/>
</dbReference>
<dbReference type="GO" id="GO:0008360">
    <property type="term" value="P:regulation of cell shape"/>
    <property type="evidence" value="ECO:0007669"/>
    <property type="project" value="UniProtKB-KW"/>
</dbReference>
<dbReference type="GO" id="GO:0046677">
    <property type="term" value="P:response to antibiotic"/>
    <property type="evidence" value="ECO:0007669"/>
    <property type="project" value="UniProtKB-UniRule"/>
</dbReference>
<dbReference type="HAMAP" id="MF_01006">
    <property type="entry name" value="Undec_diphosphatase"/>
    <property type="match status" value="1"/>
</dbReference>
<dbReference type="InterPro" id="IPR003824">
    <property type="entry name" value="UppP"/>
</dbReference>
<dbReference type="NCBIfam" id="NF001389">
    <property type="entry name" value="PRK00281.1-2"/>
    <property type="match status" value="1"/>
</dbReference>
<dbReference type="NCBIfam" id="NF001390">
    <property type="entry name" value="PRK00281.1-4"/>
    <property type="match status" value="1"/>
</dbReference>
<dbReference type="PANTHER" id="PTHR30622">
    <property type="entry name" value="UNDECAPRENYL-DIPHOSPHATASE"/>
    <property type="match status" value="1"/>
</dbReference>
<dbReference type="PANTHER" id="PTHR30622:SF3">
    <property type="entry name" value="UNDECAPRENYL-DIPHOSPHATASE"/>
    <property type="match status" value="1"/>
</dbReference>
<dbReference type="Pfam" id="PF02673">
    <property type="entry name" value="BacA"/>
    <property type="match status" value="1"/>
</dbReference>
<proteinExistence type="inferred from homology"/>
<evidence type="ECO:0000255" key="1">
    <source>
        <dbReference type="HAMAP-Rule" id="MF_01006"/>
    </source>
</evidence>
<sequence length="256" mass="28561">MTILDSIILGAIEGFTEFLPISSTGHLIVASEFLGLEQNAINKAYEVIIQFSAILAVIFNYKDKFSIKKIDLWMKVFIAFLPLAIIGFIFSTQIKELFSLHVVAVMFIVGGVVFLIVEKFFINEDEKTIYEVEAISLKQSLIIGFAQIFALIPGTSRAGSTIIGALLVGLSRKASAEFSFLLAFPVMGAVTAYDLLKHYKDFSEANLIILGVGFVTSFVVAYLSIKLFLKFLEKFTFFFFGVYRIVFGVILLLFFN</sequence>
<reference key="1">
    <citation type="journal article" date="2008" name="Appl. Environ. Microbiol.">
        <title>Genome of the epsilonproteobacterial chemolithoautotroph Sulfurimonas denitrificans.</title>
        <authorList>
            <person name="Sievert S.M."/>
            <person name="Scott K.M."/>
            <person name="Klotz M.G."/>
            <person name="Chain P.S.G."/>
            <person name="Hauser L.J."/>
            <person name="Hemp J."/>
            <person name="Huegler M."/>
            <person name="Land M."/>
            <person name="Lapidus A."/>
            <person name="Larimer F.W."/>
            <person name="Lucas S."/>
            <person name="Malfatti S.A."/>
            <person name="Meyer F."/>
            <person name="Paulsen I.T."/>
            <person name="Ren Q."/>
            <person name="Simon J."/>
            <person name="Bailey K."/>
            <person name="Diaz E."/>
            <person name="Fitzpatrick K.A."/>
            <person name="Glover B."/>
            <person name="Gwatney N."/>
            <person name="Korajkic A."/>
            <person name="Long A."/>
            <person name="Mobberley J.M."/>
            <person name="Pantry S.N."/>
            <person name="Pazder G."/>
            <person name="Peterson S."/>
            <person name="Quintanilla J.D."/>
            <person name="Sprinkle R."/>
            <person name="Stephens J."/>
            <person name="Thomas P."/>
            <person name="Vaughn R."/>
            <person name="Weber M.J."/>
            <person name="Wooten L.L."/>
        </authorList>
    </citation>
    <scope>NUCLEOTIDE SEQUENCE [LARGE SCALE GENOMIC DNA]</scope>
    <source>
        <strain>ATCC 33889 / DSM 1251</strain>
    </source>
</reference>
<accession>Q30UH8</accession>
<name>UPPP_SULDN</name>
<gene>
    <name evidence="1" type="primary">uppP</name>
    <name type="ordered locus">Suden_0072</name>
</gene>
<feature type="chain" id="PRO_0000227646" description="Undecaprenyl-diphosphatase">
    <location>
        <begin position="1"/>
        <end position="256"/>
    </location>
</feature>
<feature type="transmembrane region" description="Helical" evidence="1">
    <location>
        <begin position="1"/>
        <end position="21"/>
    </location>
</feature>
<feature type="transmembrane region" description="Helical" evidence="1">
    <location>
        <begin position="39"/>
        <end position="59"/>
    </location>
</feature>
<feature type="transmembrane region" description="Helical" evidence="1">
    <location>
        <begin position="70"/>
        <end position="90"/>
    </location>
</feature>
<feature type="transmembrane region" description="Helical" evidence="1">
    <location>
        <begin position="97"/>
        <end position="117"/>
    </location>
</feature>
<feature type="transmembrane region" description="Helical" evidence="1">
    <location>
        <begin position="134"/>
        <end position="154"/>
    </location>
</feature>
<feature type="transmembrane region" description="Helical" evidence="1">
    <location>
        <begin position="176"/>
        <end position="196"/>
    </location>
</feature>
<feature type="transmembrane region" description="Helical" evidence="1">
    <location>
        <begin position="205"/>
        <end position="225"/>
    </location>
</feature>
<feature type="transmembrane region" description="Helical" evidence="1">
    <location>
        <begin position="235"/>
        <end position="255"/>
    </location>
</feature>
<organism>
    <name type="scientific">Sulfurimonas denitrificans (strain ATCC 33889 / DSM 1251)</name>
    <name type="common">Thiomicrospira denitrificans (strain ATCC 33889 / DSM 1251)</name>
    <dbReference type="NCBI Taxonomy" id="326298"/>
    <lineage>
        <taxon>Bacteria</taxon>
        <taxon>Pseudomonadati</taxon>
        <taxon>Campylobacterota</taxon>
        <taxon>Epsilonproteobacteria</taxon>
        <taxon>Campylobacterales</taxon>
        <taxon>Sulfurimonadaceae</taxon>
        <taxon>Sulfurimonas</taxon>
    </lineage>
</organism>
<comment type="function">
    <text evidence="1">Catalyzes the dephosphorylation of undecaprenyl diphosphate (UPP). Confers resistance to bacitracin.</text>
</comment>
<comment type="catalytic activity">
    <reaction evidence="1">
        <text>di-trans,octa-cis-undecaprenyl diphosphate + H2O = di-trans,octa-cis-undecaprenyl phosphate + phosphate + H(+)</text>
        <dbReference type="Rhea" id="RHEA:28094"/>
        <dbReference type="ChEBI" id="CHEBI:15377"/>
        <dbReference type="ChEBI" id="CHEBI:15378"/>
        <dbReference type="ChEBI" id="CHEBI:43474"/>
        <dbReference type="ChEBI" id="CHEBI:58405"/>
        <dbReference type="ChEBI" id="CHEBI:60392"/>
        <dbReference type="EC" id="3.6.1.27"/>
    </reaction>
</comment>
<comment type="subcellular location">
    <subcellularLocation>
        <location evidence="1">Cell inner membrane</location>
        <topology evidence="1">Multi-pass membrane protein</topology>
    </subcellularLocation>
</comment>
<comment type="miscellaneous">
    <text>Bacitracin is thought to be involved in the inhibition of peptidoglycan synthesis by sequestering undecaprenyl diphosphate, thereby reducing the pool of lipid carrier available.</text>
</comment>
<comment type="similarity">
    <text evidence="1">Belongs to the UppP family.</text>
</comment>